<reference key="1">
    <citation type="journal article" date="2006" name="Phytochemistry">
        <title>Characterization of a GDP-d-mannose 3'',5''-epimerase from rice.</title>
        <authorList>
            <person name="Watanabe K."/>
            <person name="Suzuki K."/>
            <person name="Kitamura S."/>
        </authorList>
    </citation>
    <scope>NUCLEOTIDE SEQUENCE [MRNA]</scope>
    <scope>FUNCTION</scope>
    <scope>CATALYTIC ACTIVITY</scope>
    <scope>ACTIVITY REGULATION</scope>
    <scope>BIOPHYSICOCHEMICAL PROPERTIES</scope>
    <source>
        <strain>cv. Nipponbare</strain>
        <tissue>Seed</tissue>
    </source>
</reference>
<reference key="2">
    <citation type="journal article" date="2003" name="Science">
        <title>In-depth view of structure, activity, and evolution of rice chromosome 10.</title>
        <authorList>
            <person name="Yu Y."/>
            <person name="Rambo T."/>
            <person name="Currie J."/>
            <person name="Saski C."/>
            <person name="Kim H.-R."/>
            <person name="Collura K."/>
            <person name="Thompson S."/>
            <person name="Simmons J."/>
            <person name="Yang T.-J."/>
            <person name="Nah G."/>
            <person name="Patel A.J."/>
            <person name="Thurmond S."/>
            <person name="Henry D."/>
            <person name="Oates R."/>
            <person name="Palmer M."/>
            <person name="Pries G."/>
            <person name="Gibson J."/>
            <person name="Anderson H."/>
            <person name="Paradkar M."/>
            <person name="Crane L."/>
            <person name="Dale J."/>
            <person name="Carver M.B."/>
            <person name="Wood T."/>
            <person name="Frisch D."/>
            <person name="Engler F."/>
            <person name="Soderlund C."/>
            <person name="Palmer L.E."/>
            <person name="Teytelman L."/>
            <person name="Nascimento L."/>
            <person name="De la Bastide M."/>
            <person name="Spiegel L."/>
            <person name="Ware D."/>
            <person name="O'Shaughnessy A."/>
            <person name="Dike S."/>
            <person name="Dedhia N."/>
            <person name="Preston R."/>
            <person name="Huang E."/>
            <person name="Ferraro K."/>
            <person name="Kuit K."/>
            <person name="Miller B."/>
            <person name="Zutavern T."/>
            <person name="Katzenberger F."/>
            <person name="Muller S."/>
            <person name="Balija V."/>
            <person name="Martienssen R.A."/>
            <person name="Stein L."/>
            <person name="Minx P."/>
            <person name="Johnson D."/>
            <person name="Cordum H."/>
            <person name="Mardis E."/>
            <person name="Cheng Z."/>
            <person name="Jiang J."/>
            <person name="Wilson R."/>
            <person name="McCombie W.R."/>
            <person name="Wing R.A."/>
            <person name="Yuan Q."/>
            <person name="Ouyang S."/>
            <person name="Liu J."/>
            <person name="Jones K.M."/>
            <person name="Gansberger K."/>
            <person name="Moffat K."/>
            <person name="Hill J."/>
            <person name="Tsitrin T."/>
            <person name="Overton L."/>
            <person name="Bera J."/>
            <person name="Kim M."/>
            <person name="Jin S."/>
            <person name="Tallon L."/>
            <person name="Ciecko A."/>
            <person name="Pai G."/>
            <person name="Van Aken S."/>
            <person name="Utterback T."/>
            <person name="Reidmuller S."/>
            <person name="Bormann J."/>
            <person name="Feldblyum T."/>
            <person name="Hsiao J."/>
            <person name="Zismann V."/>
            <person name="Blunt S."/>
            <person name="de Vazeille A.R."/>
            <person name="Shaffer T."/>
            <person name="Koo H."/>
            <person name="Suh B."/>
            <person name="Yang Q."/>
            <person name="Haas B."/>
            <person name="Peterson J."/>
            <person name="Pertea M."/>
            <person name="Volfovsky N."/>
            <person name="Wortman J."/>
            <person name="White O."/>
            <person name="Salzberg S.L."/>
            <person name="Fraser C.M."/>
            <person name="Buell C.R."/>
            <person name="Messing J."/>
            <person name="Song R."/>
            <person name="Fuks G."/>
            <person name="Llaca V."/>
            <person name="Kovchak S."/>
            <person name="Young S."/>
            <person name="Bowers J.E."/>
            <person name="Paterson A.H."/>
            <person name="Johns M.A."/>
            <person name="Mao L."/>
            <person name="Pan H."/>
            <person name="Dean R.A."/>
        </authorList>
    </citation>
    <scope>NUCLEOTIDE SEQUENCE [LARGE SCALE GENOMIC DNA]</scope>
    <source>
        <strain>cv. Nipponbare</strain>
    </source>
</reference>
<reference key="3">
    <citation type="journal article" date="2005" name="Nature">
        <title>The map-based sequence of the rice genome.</title>
        <authorList>
            <consortium name="International rice genome sequencing project (IRGSP)"/>
        </authorList>
    </citation>
    <scope>NUCLEOTIDE SEQUENCE [LARGE SCALE GENOMIC DNA]</scope>
    <source>
        <strain>cv. Nipponbare</strain>
    </source>
</reference>
<reference key="4">
    <citation type="journal article" date="2008" name="Nucleic Acids Res.">
        <title>The rice annotation project database (RAP-DB): 2008 update.</title>
        <authorList>
            <consortium name="The rice annotation project (RAP)"/>
        </authorList>
    </citation>
    <scope>GENOME REANNOTATION</scope>
    <source>
        <strain>cv. Nipponbare</strain>
    </source>
</reference>
<reference key="5">
    <citation type="journal article" date="2013" name="Rice">
        <title>Improvement of the Oryza sativa Nipponbare reference genome using next generation sequence and optical map data.</title>
        <authorList>
            <person name="Kawahara Y."/>
            <person name="de la Bastide M."/>
            <person name="Hamilton J.P."/>
            <person name="Kanamori H."/>
            <person name="McCombie W.R."/>
            <person name="Ouyang S."/>
            <person name="Schwartz D.C."/>
            <person name="Tanaka T."/>
            <person name="Wu J."/>
            <person name="Zhou S."/>
            <person name="Childs K.L."/>
            <person name="Davidson R.M."/>
            <person name="Lin H."/>
            <person name="Quesada-Ocampo L."/>
            <person name="Vaillancourt B."/>
            <person name="Sakai H."/>
            <person name="Lee S.S."/>
            <person name="Kim J."/>
            <person name="Numa H."/>
            <person name="Itoh T."/>
            <person name="Buell C.R."/>
            <person name="Matsumoto T."/>
        </authorList>
    </citation>
    <scope>GENOME REANNOTATION</scope>
    <source>
        <strain>cv. Nipponbare</strain>
    </source>
</reference>
<reference key="6">
    <citation type="journal article" date="2005" name="PLoS Biol.">
        <title>The genomes of Oryza sativa: a history of duplications.</title>
        <authorList>
            <person name="Yu J."/>
            <person name="Wang J."/>
            <person name="Lin W."/>
            <person name="Li S."/>
            <person name="Li H."/>
            <person name="Zhou J."/>
            <person name="Ni P."/>
            <person name="Dong W."/>
            <person name="Hu S."/>
            <person name="Zeng C."/>
            <person name="Zhang J."/>
            <person name="Zhang Y."/>
            <person name="Li R."/>
            <person name="Xu Z."/>
            <person name="Li S."/>
            <person name="Li X."/>
            <person name="Zheng H."/>
            <person name="Cong L."/>
            <person name="Lin L."/>
            <person name="Yin J."/>
            <person name="Geng J."/>
            <person name="Li G."/>
            <person name="Shi J."/>
            <person name="Liu J."/>
            <person name="Lv H."/>
            <person name="Li J."/>
            <person name="Wang J."/>
            <person name="Deng Y."/>
            <person name="Ran L."/>
            <person name="Shi X."/>
            <person name="Wang X."/>
            <person name="Wu Q."/>
            <person name="Li C."/>
            <person name="Ren X."/>
            <person name="Wang J."/>
            <person name="Wang X."/>
            <person name="Li D."/>
            <person name="Liu D."/>
            <person name="Zhang X."/>
            <person name="Ji Z."/>
            <person name="Zhao W."/>
            <person name="Sun Y."/>
            <person name="Zhang Z."/>
            <person name="Bao J."/>
            <person name="Han Y."/>
            <person name="Dong L."/>
            <person name="Ji J."/>
            <person name="Chen P."/>
            <person name="Wu S."/>
            <person name="Liu J."/>
            <person name="Xiao Y."/>
            <person name="Bu D."/>
            <person name="Tan J."/>
            <person name="Yang L."/>
            <person name="Ye C."/>
            <person name="Zhang J."/>
            <person name="Xu J."/>
            <person name="Zhou Y."/>
            <person name="Yu Y."/>
            <person name="Zhang B."/>
            <person name="Zhuang S."/>
            <person name="Wei H."/>
            <person name="Liu B."/>
            <person name="Lei M."/>
            <person name="Yu H."/>
            <person name="Li Y."/>
            <person name="Xu H."/>
            <person name="Wei S."/>
            <person name="He X."/>
            <person name="Fang L."/>
            <person name="Zhang Z."/>
            <person name="Zhang Y."/>
            <person name="Huang X."/>
            <person name="Su Z."/>
            <person name="Tong W."/>
            <person name="Li J."/>
            <person name="Tong Z."/>
            <person name="Li S."/>
            <person name="Ye J."/>
            <person name="Wang L."/>
            <person name="Fang L."/>
            <person name="Lei T."/>
            <person name="Chen C.-S."/>
            <person name="Chen H.-C."/>
            <person name="Xu Z."/>
            <person name="Li H."/>
            <person name="Huang H."/>
            <person name="Zhang F."/>
            <person name="Xu H."/>
            <person name="Li N."/>
            <person name="Zhao C."/>
            <person name="Li S."/>
            <person name="Dong L."/>
            <person name="Huang Y."/>
            <person name="Li L."/>
            <person name="Xi Y."/>
            <person name="Qi Q."/>
            <person name="Li W."/>
            <person name="Zhang B."/>
            <person name="Hu W."/>
            <person name="Zhang Y."/>
            <person name="Tian X."/>
            <person name="Jiao Y."/>
            <person name="Liang X."/>
            <person name="Jin J."/>
            <person name="Gao L."/>
            <person name="Zheng W."/>
            <person name="Hao B."/>
            <person name="Liu S.-M."/>
            <person name="Wang W."/>
            <person name="Yuan L."/>
            <person name="Cao M."/>
            <person name="McDermott J."/>
            <person name="Samudrala R."/>
            <person name="Wang J."/>
            <person name="Wong G.K.-S."/>
            <person name="Yang H."/>
        </authorList>
    </citation>
    <scope>NUCLEOTIDE SEQUENCE [LARGE SCALE GENOMIC DNA]</scope>
    <source>
        <strain>cv. Nipponbare</strain>
    </source>
</reference>
<reference key="7">
    <citation type="journal article" date="2003" name="Science">
        <title>Collection, mapping, and annotation of over 28,000 cDNA clones from japonica rice.</title>
        <authorList>
            <consortium name="The rice full-length cDNA consortium"/>
        </authorList>
    </citation>
    <scope>NUCLEOTIDE SEQUENCE [LARGE SCALE MRNA]</scope>
    <source>
        <strain>cv. Nipponbare</strain>
    </source>
</reference>
<reference key="8">
    <citation type="journal article" date="1998" name="Nature">
        <title>The biosynthetic pathway of vitamin C in higher plants.</title>
        <authorList>
            <person name="Wheeler G.L."/>
            <person name="Jones M.A."/>
            <person name="Smirnoff N."/>
        </authorList>
    </citation>
    <scope>PATHWAY</scope>
</reference>
<name>GME1_ORYSJ</name>
<dbReference type="EC" id="5.1.3.18" evidence="3"/>
<dbReference type="EMBL" id="AB193582">
    <property type="protein sequence ID" value="BAD66930.1"/>
    <property type="molecule type" value="mRNA"/>
</dbReference>
<dbReference type="EMBL" id="AC016780">
    <property type="protein sequence ID" value="AAM08784.1"/>
    <property type="molecule type" value="Genomic_DNA"/>
</dbReference>
<dbReference type="EMBL" id="DP000086">
    <property type="protein sequence ID" value="ABB47619.2"/>
    <property type="molecule type" value="Genomic_DNA"/>
</dbReference>
<dbReference type="EMBL" id="DP000086">
    <property type="protein sequence ID" value="ABG66078.1"/>
    <property type="status" value="ALT_SEQ"/>
    <property type="molecule type" value="Genomic_DNA"/>
</dbReference>
<dbReference type="EMBL" id="AP008216">
    <property type="protein sequence ID" value="BAF26523.1"/>
    <property type="molecule type" value="Genomic_DNA"/>
</dbReference>
<dbReference type="EMBL" id="AP014966">
    <property type="protein sequence ID" value="BAT10866.1"/>
    <property type="molecule type" value="Genomic_DNA"/>
</dbReference>
<dbReference type="EMBL" id="CM000147">
    <property type="protein sequence ID" value="EAZ16087.1"/>
    <property type="molecule type" value="Genomic_DNA"/>
</dbReference>
<dbReference type="EMBL" id="AK104822">
    <property type="protein sequence ID" value="BAG96977.1"/>
    <property type="molecule type" value="mRNA"/>
</dbReference>
<dbReference type="RefSeq" id="XP_015614669.1">
    <property type="nucleotide sequence ID" value="XM_015759183.1"/>
</dbReference>
<dbReference type="SMR" id="A3C4S4"/>
<dbReference type="BioGRID" id="817673">
    <property type="interactions" value="1"/>
</dbReference>
<dbReference type="FunCoup" id="A3C4S4">
    <property type="interactions" value="1078"/>
</dbReference>
<dbReference type="STRING" id="39947.A3C4S4"/>
<dbReference type="iPTMnet" id="A3C4S4"/>
<dbReference type="PaxDb" id="39947-A3C4S4"/>
<dbReference type="EnsemblPlants" id="Os10t0417600-01">
    <property type="protein sequence ID" value="Os10t0417600-01"/>
    <property type="gene ID" value="Os10g0417600"/>
</dbReference>
<dbReference type="Gramene" id="Os10t0417600-01">
    <property type="protein sequence ID" value="Os10t0417600-01"/>
    <property type="gene ID" value="Os10g0417600"/>
</dbReference>
<dbReference type="KEGG" id="dosa:Os10g0417600"/>
<dbReference type="eggNOG" id="KOG1429">
    <property type="taxonomic scope" value="Eukaryota"/>
</dbReference>
<dbReference type="HOGENOM" id="CLU_007383_4_2_1"/>
<dbReference type="InParanoid" id="A3C4S4"/>
<dbReference type="OMA" id="ASAGCKW"/>
<dbReference type="OrthoDB" id="331544at2759"/>
<dbReference type="BioCyc" id="MetaCyc:MONOMER-11941"/>
<dbReference type="BRENDA" id="5.1.3.18">
    <property type="organism ID" value="4460"/>
</dbReference>
<dbReference type="PlantReactome" id="R-OSA-1119410">
    <property type="pathway name" value="Ascorbate biosynthesis"/>
</dbReference>
<dbReference type="SABIO-RK" id="A3C4S4"/>
<dbReference type="UniPathway" id="UPA00990">
    <property type="reaction ID" value="UER00931"/>
</dbReference>
<dbReference type="Proteomes" id="UP000000763">
    <property type="component" value="Chromosome 10"/>
</dbReference>
<dbReference type="Proteomes" id="UP000007752">
    <property type="component" value="Chromosome 10"/>
</dbReference>
<dbReference type="Proteomes" id="UP000059680">
    <property type="component" value="Chromosome 10"/>
</dbReference>
<dbReference type="GO" id="GO:0047918">
    <property type="term" value="F:GDP-mannose 3,5-epimerase activity"/>
    <property type="evidence" value="ECO:0007669"/>
    <property type="project" value="UniProtKB-EC"/>
</dbReference>
<dbReference type="GO" id="GO:0051287">
    <property type="term" value="F:NAD binding"/>
    <property type="evidence" value="ECO:0007669"/>
    <property type="project" value="InterPro"/>
</dbReference>
<dbReference type="GO" id="GO:0019853">
    <property type="term" value="P:L-ascorbic acid biosynthetic process"/>
    <property type="evidence" value="ECO:0007669"/>
    <property type="project" value="UniProtKB-KW"/>
</dbReference>
<dbReference type="CDD" id="cd05273">
    <property type="entry name" value="GME-like_SDR_e"/>
    <property type="match status" value="1"/>
</dbReference>
<dbReference type="Gene3D" id="3.40.50.720">
    <property type="entry name" value="NAD(P)-binding Rossmann-like Domain"/>
    <property type="match status" value="1"/>
</dbReference>
<dbReference type="Gene3D" id="3.90.25.10">
    <property type="entry name" value="UDP-galactose 4-epimerase, domain 1"/>
    <property type="match status" value="1"/>
</dbReference>
<dbReference type="InterPro" id="IPR001509">
    <property type="entry name" value="Epimerase_deHydtase"/>
</dbReference>
<dbReference type="InterPro" id="IPR033890">
    <property type="entry name" value="GDP-Man_epi"/>
</dbReference>
<dbReference type="InterPro" id="IPR036291">
    <property type="entry name" value="NAD(P)-bd_dom_sf"/>
</dbReference>
<dbReference type="PANTHER" id="PTHR43574">
    <property type="entry name" value="EPIMERASE-RELATED"/>
    <property type="match status" value="1"/>
</dbReference>
<dbReference type="Pfam" id="PF01370">
    <property type="entry name" value="Epimerase"/>
    <property type="match status" value="1"/>
</dbReference>
<dbReference type="SUPFAM" id="SSF51735">
    <property type="entry name" value="NAD(P)-binding Rossmann-fold domains"/>
    <property type="match status" value="1"/>
</dbReference>
<accession>A3C4S4</accession>
<accession>B7EX80</accession>
<accession>Q0IXP2</accession>
<accession>Q0R4F5</accession>
<accession>Q109P5</accession>
<accession>Q338B5</accession>
<accession>Q5W7P1</accession>
<accession>Q8S862</accession>
<sequence length="378" mass="42778">MGSSEKNGTAYGEYTYAELEREQYWPSEKLRISITGAGGFIGSHIARRLKSEGHYIIASDWKKNEHMTEDMFCHEFHLVDLRVMDNCLKVTNGVDHVFNLAADMGGMGFIQSNHSVIMYNNTMISFNMLEAARINGVKRFFYASSACIYPEFKQLETNVSLKESDAWPAEPQDAYGLEKLATEELCKHYTKDFGIECRVGRFHNIYGPFGTWKGGREKAPAAFCRKAQTSTDRFEMWGDGLQTRSFTFIDECVEGVLRLTKSDFREPVNIGSDEMVSMNEMAEIILSFEDRELPIHHIPGPEGVRGRNSDNTLIKEKLGWAPTMKLKDGLRFTYFWIKEQIEKEKTQGVDIAGYGSSKVVSTQAPVQLGSLRAADGKE</sequence>
<feature type="chain" id="PRO_0000233697" description="GDP-mannose 3,5-epimerase 1">
    <location>
        <begin position="1"/>
        <end position="378"/>
    </location>
</feature>
<feature type="active site" description="Proton acceptor" evidence="1">
    <location>
        <position position="175"/>
    </location>
</feature>
<feature type="binding site" evidence="1">
    <location>
        <begin position="36"/>
        <end position="62"/>
    </location>
    <ligand>
        <name>NAD(+)</name>
        <dbReference type="ChEBI" id="CHEBI:57540"/>
    </ligand>
</feature>
<feature type="binding site" evidence="1">
    <location>
        <position position="60"/>
    </location>
    <ligand>
        <name>NAD(+)</name>
        <dbReference type="ChEBI" id="CHEBI:57540"/>
    </ligand>
</feature>
<feature type="binding site" evidence="1">
    <location>
        <position position="80"/>
    </location>
    <ligand>
        <name>NAD(+)</name>
        <dbReference type="ChEBI" id="CHEBI:57540"/>
    </ligand>
</feature>
<feature type="binding site" evidence="1">
    <location>
        <position position="105"/>
    </location>
    <ligand>
        <name>substrate</name>
    </ligand>
</feature>
<feature type="binding site" evidence="1">
    <location>
        <begin position="145"/>
        <end position="147"/>
    </location>
    <ligand>
        <name>substrate</name>
    </ligand>
</feature>
<feature type="binding site" evidence="1">
    <location>
        <position position="175"/>
    </location>
    <ligand>
        <name>NAD(+)</name>
        <dbReference type="ChEBI" id="CHEBI:57540"/>
    </ligand>
</feature>
<feature type="binding site" evidence="1">
    <location>
        <position position="179"/>
    </location>
    <ligand>
        <name>NAD(+)</name>
        <dbReference type="ChEBI" id="CHEBI:57540"/>
    </ligand>
</feature>
<feature type="binding site" evidence="1">
    <location>
        <position position="204"/>
    </location>
    <ligand>
        <name>substrate</name>
    </ligand>
</feature>
<feature type="binding site" evidence="1">
    <location>
        <begin position="217"/>
        <end position="219"/>
    </location>
    <ligand>
        <name>substrate</name>
    </ligand>
</feature>
<feature type="binding site" evidence="1">
    <location>
        <position position="226"/>
    </location>
    <ligand>
        <name>substrate</name>
    </ligand>
</feature>
<feature type="binding site" evidence="1">
    <location>
        <begin position="242"/>
        <end position="244"/>
    </location>
    <ligand>
        <name>substrate</name>
    </ligand>
</feature>
<feature type="binding site" evidence="1">
    <location>
        <position position="307"/>
    </location>
    <ligand>
        <name>substrate</name>
    </ligand>
</feature>
<feature type="binding site" evidence="1">
    <location>
        <position position="357"/>
    </location>
    <ligand>
        <name>substrate</name>
    </ligand>
</feature>
<keyword id="KW-0060">Ascorbate biosynthesis</keyword>
<keyword id="KW-0413">Isomerase</keyword>
<keyword id="KW-0520">NAD</keyword>
<keyword id="KW-1185">Reference proteome</keyword>
<protein>
    <recommendedName>
        <fullName>GDP-mannose 3,5-epimerase 1</fullName>
        <shortName>GDP-Man 3,5-epimerase 1</shortName>
        <ecNumber evidence="3">5.1.3.18</ecNumber>
    </recommendedName>
    <alternativeName>
        <fullName>OsGME-1</fullName>
    </alternativeName>
</protein>
<proteinExistence type="evidence at protein level"/>
<evidence type="ECO:0000250" key="1"/>
<evidence type="ECO:0000250" key="2">
    <source>
        <dbReference type="UniProtKB" id="Q93VR3"/>
    </source>
</evidence>
<evidence type="ECO:0000269" key="3">
    <source>
    </source>
</evidence>
<evidence type="ECO:0000269" key="4">
    <source>
    </source>
</evidence>
<evidence type="ECO:0000305" key="5"/>
<gene>
    <name type="primary">GME-1</name>
    <name type="ordered locus">Os10g0417600</name>
    <name type="ordered locus">LOC_Os10g28200</name>
    <name type="ORF">OsJ_030296</name>
    <name type="ORF">OSJNBa0061K21.15</name>
</gene>
<comment type="function">
    <text evidence="3">Catalyzes a reversible epimerization of GDP-D-mannose that precedes the committed step in the biosynthesis of vitamin C (L-ascorbate), resulting in the hydrolysis of the highly energetic glycosyl-pyrophosphoryl linkage. Able to catalyze 2 distinct epimerization reactions and can release both GDP-L-galactose and GDP-L-gulose from GDP-mannose.</text>
</comment>
<comment type="catalytic activity">
    <reaction evidence="3">
        <text>GDP-alpha-D-mannose = GDP-beta-L-gulose</text>
        <dbReference type="Rhea" id="RHEA:63800"/>
        <dbReference type="ChEBI" id="CHEBI:57527"/>
        <dbReference type="ChEBI" id="CHEBI:149550"/>
        <dbReference type="EC" id="5.1.3.18"/>
    </reaction>
</comment>
<comment type="catalytic activity">
    <reaction evidence="3">
        <text>GDP-beta-L-gulose = GDP-beta-L-galactose</text>
        <dbReference type="Rhea" id="RHEA:63804"/>
        <dbReference type="ChEBI" id="CHEBI:61454"/>
        <dbReference type="ChEBI" id="CHEBI:149550"/>
        <dbReference type="EC" id="5.1.3.18"/>
    </reaction>
</comment>
<comment type="cofactor">
    <cofactor evidence="2">
        <name>NAD(+)</name>
        <dbReference type="ChEBI" id="CHEBI:57540"/>
    </cofactor>
</comment>
<comment type="activity regulation">
    <text evidence="3">Strongly activated by NAD. Activated by NADP. Slightly activated by NADH and NADPH. Inhibited by GDP.</text>
</comment>
<comment type="biophysicochemical properties">
    <kinetics>
        <KM evidence="3">7.12 uM for GDP-mannose</KM>
        <KM evidence="3">12 uM for GDP-mannose (in the presence of 20 uM NAD(+))</KM>
        <text>The catalytic efficiency increases by 2-fold in the presence of NAD(+).</text>
    </kinetics>
    <phDependence>
        <text evidence="3">Optimum pH is 7.5-8.0 at 20 degrees Celsius, and 8.0-8.5 at 25 degrees Celsius in the presence of NAD(+).</text>
    </phDependence>
</comment>
<comment type="pathway">
    <text evidence="4">Cofactor biosynthesis; L-ascorbate biosynthesis via GDP-alpha-D-mannose pathway; L-ascorbate from GDP-alpha-D-mannose: step 1/5.</text>
</comment>
<comment type="subunit">
    <text evidence="1">Homodimer.</text>
</comment>
<comment type="similarity">
    <text evidence="5">Belongs to the NAD(P)-dependent epimerase/dehydratase family.</text>
</comment>
<comment type="sequence caution" evidence="5">
    <conflict type="erroneous gene model prediction">
        <sequence resource="EMBL-CDS" id="ABG66078"/>
    </conflict>
</comment>
<organism>
    <name type="scientific">Oryza sativa subsp. japonica</name>
    <name type="common">Rice</name>
    <dbReference type="NCBI Taxonomy" id="39947"/>
    <lineage>
        <taxon>Eukaryota</taxon>
        <taxon>Viridiplantae</taxon>
        <taxon>Streptophyta</taxon>
        <taxon>Embryophyta</taxon>
        <taxon>Tracheophyta</taxon>
        <taxon>Spermatophyta</taxon>
        <taxon>Magnoliopsida</taxon>
        <taxon>Liliopsida</taxon>
        <taxon>Poales</taxon>
        <taxon>Poaceae</taxon>
        <taxon>BOP clade</taxon>
        <taxon>Oryzoideae</taxon>
        <taxon>Oryzeae</taxon>
        <taxon>Oryzinae</taxon>
        <taxon>Oryza</taxon>
        <taxon>Oryza sativa</taxon>
    </lineage>
</organism>